<evidence type="ECO:0000255" key="1"/>
<evidence type="ECO:0000255" key="2">
    <source>
        <dbReference type="PROSITE-ProRule" id="PRU00521"/>
    </source>
</evidence>
<evidence type="ECO:0000305" key="3"/>
<name>VGE1_EHV2</name>
<reference key="1">
    <citation type="journal article" date="1995" name="J. Mol. Biol.">
        <title>The DNA sequence of equine herpesvirus 2.</title>
        <authorList>
            <person name="Telford E.A.R."/>
            <person name="Watson M.S."/>
            <person name="Aird H.C."/>
            <person name="Perry J."/>
            <person name="Davison A.J."/>
        </authorList>
    </citation>
    <scope>NUCLEOTIDE SEQUENCE [LARGE SCALE GENOMIC DNA]</scope>
</reference>
<organism>
    <name type="scientific">Equine herpesvirus 2 (strain 86/87)</name>
    <name type="common">EHV-2</name>
    <dbReference type="NCBI Taxonomy" id="82831"/>
    <lineage>
        <taxon>Viruses</taxon>
        <taxon>Duplodnaviria</taxon>
        <taxon>Heunggongvirae</taxon>
        <taxon>Peploviricota</taxon>
        <taxon>Herviviricetes</taxon>
        <taxon>Herpesvirales</taxon>
        <taxon>Orthoherpesviridae</taxon>
        <taxon>Gammaherpesvirinae</taxon>
        <taxon>Percavirus</taxon>
        <taxon>Percavirus equidgamma2</taxon>
        <taxon>Equid gammaherpesvirus 2</taxon>
    </lineage>
</organism>
<protein>
    <recommendedName>
        <fullName>G-protein coupled receptor E1</fullName>
    </recommendedName>
</protein>
<organismHost>
    <name type="scientific">Equus caballus</name>
    <name type="common">Horse</name>
    <dbReference type="NCBI Taxonomy" id="9796"/>
</organismHost>
<accession>Q89609</accession>
<gene>
    <name type="primary">E1</name>
</gene>
<feature type="chain" id="PRO_0000405982" description="G-protein coupled receptor E1">
    <location>
        <begin position="1"/>
        <end position="383"/>
    </location>
</feature>
<feature type="transmembrane region" description="Helical" evidence="1">
    <location>
        <begin position="13"/>
        <end position="35"/>
    </location>
</feature>
<feature type="transmembrane region" description="Helical" evidence="1">
    <location>
        <begin position="78"/>
        <end position="98"/>
    </location>
</feature>
<feature type="transmembrane region" description="Helical" evidence="1">
    <location>
        <begin position="109"/>
        <end position="129"/>
    </location>
</feature>
<feature type="transmembrane region" description="Helical" evidence="1">
    <location>
        <begin position="160"/>
        <end position="180"/>
    </location>
</feature>
<feature type="transmembrane region" description="Helical" evidence="1">
    <location>
        <begin position="190"/>
        <end position="210"/>
    </location>
</feature>
<feature type="transmembrane region" description="Helical" evidence="1">
    <location>
        <begin position="242"/>
        <end position="262"/>
    </location>
</feature>
<feature type="transmembrane region" description="Helical" evidence="1">
    <location>
        <begin position="279"/>
        <end position="299"/>
    </location>
</feature>
<feature type="transmembrane region" description="Helical" evidence="1">
    <location>
        <begin position="323"/>
        <end position="343"/>
    </location>
</feature>
<feature type="transmembrane region" description="Helical" evidence="1">
    <location>
        <begin position="351"/>
        <end position="371"/>
    </location>
</feature>
<feature type="disulfide bond" evidence="2">
    <location>
        <begin position="145"/>
        <end position="222"/>
    </location>
</feature>
<sequence length="383" mass="43668">MATTSATSTVNTSSLATTMTTNFTSLLTSVVTTIASLVPSTNSSEDYYDDLDDVDYEESAPCYKSDTTRLAAQVVPALYLLVFLFGLLGNILVVIIVIRYMKIKNLTNMLLLNLAISDLLFLLTLPFWMHYIGMYHDWTFGISLCKLLRGVCYMSLYSQVFCIILLTVDRYLAVVYAVTALRFRTVTCGIVTCVCTWFLAGLLSLPEFFFHGHQDDNGRVQCDPYYPEMSTNVWRRAHVAKVIMLSLILPLLIMAVCYYVIIRRLLRRPSKKKYKAIRLIFVIMVAYFVFWTPYNIVLLLSTFHATLLNLQCALSSNLDMALLITKTVAYTHCCINPVIYAFVGEKFRRHLYHFFHTYVAIYLCKYIPFLSGDGEGKEGPTRI</sequence>
<dbReference type="EMBL" id="U20824">
    <property type="protein sequence ID" value="AAC13788.1"/>
    <property type="molecule type" value="Genomic_DNA"/>
</dbReference>
<dbReference type="EMBL" id="U20824">
    <property type="protein sequence ID" value="AAC13866.1"/>
    <property type="molecule type" value="Genomic_DNA"/>
</dbReference>
<dbReference type="PIR" id="S55594">
    <property type="entry name" value="S55594"/>
</dbReference>
<dbReference type="RefSeq" id="NP_042597.1">
    <property type="nucleotide sequence ID" value="NC_001650.2"/>
</dbReference>
<dbReference type="RefSeq" id="NP_042675.1">
    <property type="nucleotide sequence ID" value="NC_001650.2"/>
</dbReference>
<dbReference type="SMR" id="Q89609"/>
<dbReference type="GeneID" id="1461016"/>
<dbReference type="GeneID" id="1461067"/>
<dbReference type="KEGG" id="vg:1461016"/>
<dbReference type="KEGG" id="vg:1461067"/>
<dbReference type="Proteomes" id="UP000007083">
    <property type="component" value="Segment"/>
</dbReference>
<dbReference type="GO" id="GO:0033644">
    <property type="term" value="C:host cell membrane"/>
    <property type="evidence" value="ECO:0007669"/>
    <property type="project" value="UniProtKB-SubCell"/>
</dbReference>
<dbReference type="GO" id="GO:0016020">
    <property type="term" value="C:membrane"/>
    <property type="evidence" value="ECO:0007669"/>
    <property type="project" value="UniProtKB-KW"/>
</dbReference>
<dbReference type="GO" id="GO:0019957">
    <property type="term" value="F:C-C chemokine binding"/>
    <property type="evidence" value="ECO:0007669"/>
    <property type="project" value="TreeGrafter"/>
</dbReference>
<dbReference type="GO" id="GO:0016493">
    <property type="term" value="F:C-C chemokine receptor activity"/>
    <property type="evidence" value="ECO:0007669"/>
    <property type="project" value="InterPro"/>
</dbReference>
<dbReference type="GO" id="GO:0019722">
    <property type="term" value="P:calcium-mediated signaling"/>
    <property type="evidence" value="ECO:0007669"/>
    <property type="project" value="TreeGrafter"/>
</dbReference>
<dbReference type="GO" id="GO:0060326">
    <property type="term" value="P:cell chemotaxis"/>
    <property type="evidence" value="ECO:0007669"/>
    <property type="project" value="TreeGrafter"/>
</dbReference>
<dbReference type="GO" id="GO:0006955">
    <property type="term" value="P:immune response"/>
    <property type="evidence" value="ECO:0007669"/>
    <property type="project" value="InterPro"/>
</dbReference>
<dbReference type="GO" id="GO:0007204">
    <property type="term" value="P:positive regulation of cytosolic calcium ion concentration"/>
    <property type="evidence" value="ECO:0007669"/>
    <property type="project" value="TreeGrafter"/>
</dbReference>
<dbReference type="GO" id="GO:0090026">
    <property type="term" value="P:positive regulation of monocyte chemotaxis"/>
    <property type="evidence" value="ECO:0007669"/>
    <property type="project" value="InterPro"/>
</dbReference>
<dbReference type="FunFam" id="1.20.1070.10:FF:000026">
    <property type="entry name" value="C-C chemokine receptor type 5"/>
    <property type="match status" value="1"/>
</dbReference>
<dbReference type="Gene3D" id="1.20.1070.10">
    <property type="entry name" value="Rhodopsin 7-helix transmembrane proteins"/>
    <property type="match status" value="1"/>
</dbReference>
<dbReference type="InterPro" id="IPR050119">
    <property type="entry name" value="CCR1-9-like"/>
</dbReference>
<dbReference type="InterPro" id="IPR002236">
    <property type="entry name" value="Chemokine_CCR1"/>
</dbReference>
<dbReference type="InterPro" id="IPR000355">
    <property type="entry name" value="Chemokine_rcpt"/>
</dbReference>
<dbReference type="InterPro" id="IPR000276">
    <property type="entry name" value="GPCR_Rhodpsn"/>
</dbReference>
<dbReference type="InterPro" id="IPR017452">
    <property type="entry name" value="GPCR_Rhodpsn_7TM"/>
</dbReference>
<dbReference type="PANTHER" id="PTHR10489:SF649">
    <property type="entry name" value="C-C CHEMOKINE RECEPTOR TYPE 3"/>
    <property type="match status" value="1"/>
</dbReference>
<dbReference type="PANTHER" id="PTHR10489">
    <property type="entry name" value="CELL ADHESION MOLECULE"/>
    <property type="match status" value="1"/>
</dbReference>
<dbReference type="Pfam" id="PF00001">
    <property type="entry name" value="7tm_1"/>
    <property type="match status" value="1"/>
</dbReference>
<dbReference type="PRINTS" id="PR00657">
    <property type="entry name" value="CCCHEMOKINER"/>
</dbReference>
<dbReference type="PRINTS" id="PR01106">
    <property type="entry name" value="CHEMOKINER1"/>
</dbReference>
<dbReference type="PRINTS" id="PR00237">
    <property type="entry name" value="GPCRRHODOPSN"/>
</dbReference>
<dbReference type="SUPFAM" id="SSF81321">
    <property type="entry name" value="Family A G protein-coupled receptor-like"/>
    <property type="match status" value="1"/>
</dbReference>
<dbReference type="PROSITE" id="PS50262">
    <property type="entry name" value="G_PROTEIN_RECEP_F1_2"/>
    <property type="match status" value="1"/>
</dbReference>
<keyword id="KW-1015">Disulfide bond</keyword>
<keyword id="KW-0297">G-protein coupled receptor</keyword>
<keyword id="KW-1043">Host membrane</keyword>
<keyword id="KW-0472">Membrane</keyword>
<keyword id="KW-0675">Receptor</keyword>
<keyword id="KW-1185">Reference proteome</keyword>
<keyword id="KW-0807">Transducer</keyword>
<keyword id="KW-0812">Transmembrane</keyword>
<keyword id="KW-1133">Transmembrane helix</keyword>
<comment type="subcellular location">
    <subcellularLocation>
        <location evidence="3">Host membrane</location>
        <topology evidence="3">Multi-pass membrane protein</topology>
    </subcellularLocation>
</comment>
<comment type="similarity">
    <text evidence="2">Belongs to the G-protein coupled receptor 1 family.</text>
</comment>
<proteinExistence type="inferred from homology"/>